<evidence type="ECO:0000255" key="1">
    <source>
        <dbReference type="HAMAP-Rule" id="MF_01216"/>
    </source>
</evidence>
<dbReference type="EC" id="1.6.5.-" evidence="1"/>
<dbReference type="EC" id="1.7.1.17" evidence="1"/>
<dbReference type="EMBL" id="CP000084">
    <property type="protein sequence ID" value="AAZ21600.1"/>
    <property type="molecule type" value="Genomic_DNA"/>
</dbReference>
<dbReference type="RefSeq" id="WP_011281939.1">
    <property type="nucleotide sequence ID" value="NC_007205.1"/>
</dbReference>
<dbReference type="SMR" id="Q4FMI9"/>
<dbReference type="STRING" id="335992.SAR11_0782"/>
<dbReference type="GeneID" id="66295283"/>
<dbReference type="KEGG" id="pub:SAR11_0782"/>
<dbReference type="eggNOG" id="COG1182">
    <property type="taxonomic scope" value="Bacteria"/>
</dbReference>
<dbReference type="HOGENOM" id="CLU_088964_0_3_5"/>
<dbReference type="OrthoDB" id="9787136at2"/>
<dbReference type="Proteomes" id="UP000002528">
    <property type="component" value="Chromosome"/>
</dbReference>
<dbReference type="GO" id="GO:0009055">
    <property type="term" value="F:electron transfer activity"/>
    <property type="evidence" value="ECO:0007669"/>
    <property type="project" value="UniProtKB-UniRule"/>
</dbReference>
<dbReference type="GO" id="GO:0010181">
    <property type="term" value="F:FMN binding"/>
    <property type="evidence" value="ECO:0007669"/>
    <property type="project" value="UniProtKB-UniRule"/>
</dbReference>
<dbReference type="GO" id="GO:0016652">
    <property type="term" value="F:oxidoreductase activity, acting on NAD(P)H as acceptor"/>
    <property type="evidence" value="ECO:0007669"/>
    <property type="project" value="UniProtKB-UniRule"/>
</dbReference>
<dbReference type="GO" id="GO:0016655">
    <property type="term" value="F:oxidoreductase activity, acting on NAD(P)H, quinone or similar compound as acceptor"/>
    <property type="evidence" value="ECO:0007669"/>
    <property type="project" value="InterPro"/>
</dbReference>
<dbReference type="Gene3D" id="3.40.50.360">
    <property type="match status" value="1"/>
</dbReference>
<dbReference type="HAMAP" id="MF_01216">
    <property type="entry name" value="Azoreductase_type1"/>
    <property type="match status" value="1"/>
</dbReference>
<dbReference type="InterPro" id="IPR003680">
    <property type="entry name" value="Flavodoxin_fold"/>
</dbReference>
<dbReference type="InterPro" id="IPR029039">
    <property type="entry name" value="Flavoprotein-like_sf"/>
</dbReference>
<dbReference type="InterPro" id="IPR050104">
    <property type="entry name" value="FMN-dep_NADH:Q_OxRdtase_AzoR1"/>
</dbReference>
<dbReference type="InterPro" id="IPR023048">
    <property type="entry name" value="NADH:quinone_OxRdtase_FMN_depd"/>
</dbReference>
<dbReference type="PANTHER" id="PTHR43741">
    <property type="entry name" value="FMN-DEPENDENT NADH-AZOREDUCTASE 1"/>
    <property type="match status" value="1"/>
</dbReference>
<dbReference type="PANTHER" id="PTHR43741:SF4">
    <property type="entry name" value="FMN-DEPENDENT NADH:QUINONE OXIDOREDUCTASE"/>
    <property type="match status" value="1"/>
</dbReference>
<dbReference type="Pfam" id="PF02525">
    <property type="entry name" value="Flavodoxin_2"/>
    <property type="match status" value="1"/>
</dbReference>
<dbReference type="SUPFAM" id="SSF52218">
    <property type="entry name" value="Flavoproteins"/>
    <property type="match status" value="1"/>
</dbReference>
<keyword id="KW-0285">Flavoprotein</keyword>
<keyword id="KW-0288">FMN</keyword>
<keyword id="KW-0520">NAD</keyword>
<keyword id="KW-0560">Oxidoreductase</keyword>
<keyword id="KW-1185">Reference proteome</keyword>
<protein>
    <recommendedName>
        <fullName evidence="1">FMN-dependent NADH:quinone oxidoreductase</fullName>
        <ecNumber evidence="1">1.6.5.-</ecNumber>
    </recommendedName>
    <alternativeName>
        <fullName evidence="1">Azo-dye reductase</fullName>
    </alternativeName>
    <alternativeName>
        <fullName evidence="1">FMN-dependent NADH-azo compound oxidoreductase</fullName>
    </alternativeName>
    <alternativeName>
        <fullName evidence="1">FMN-dependent NADH-azoreductase</fullName>
        <ecNumber evidence="1">1.7.1.17</ecNumber>
    </alternativeName>
</protein>
<comment type="function">
    <text evidence="1">Quinone reductase that provides resistance to thiol-specific stress caused by electrophilic quinones.</text>
</comment>
<comment type="function">
    <text evidence="1">Also exhibits azoreductase activity. Catalyzes the reductive cleavage of the azo bond in aromatic azo compounds to the corresponding amines.</text>
</comment>
<comment type="catalytic activity">
    <reaction evidence="1">
        <text>2 a quinone + NADH + H(+) = 2 a 1,4-benzosemiquinone + NAD(+)</text>
        <dbReference type="Rhea" id="RHEA:65952"/>
        <dbReference type="ChEBI" id="CHEBI:15378"/>
        <dbReference type="ChEBI" id="CHEBI:57540"/>
        <dbReference type="ChEBI" id="CHEBI:57945"/>
        <dbReference type="ChEBI" id="CHEBI:132124"/>
        <dbReference type="ChEBI" id="CHEBI:134225"/>
    </reaction>
</comment>
<comment type="catalytic activity">
    <reaction evidence="1">
        <text>N,N-dimethyl-1,4-phenylenediamine + anthranilate + 2 NAD(+) = 2-(4-dimethylaminophenyl)diazenylbenzoate + 2 NADH + 2 H(+)</text>
        <dbReference type="Rhea" id="RHEA:55872"/>
        <dbReference type="ChEBI" id="CHEBI:15378"/>
        <dbReference type="ChEBI" id="CHEBI:15783"/>
        <dbReference type="ChEBI" id="CHEBI:16567"/>
        <dbReference type="ChEBI" id="CHEBI:57540"/>
        <dbReference type="ChEBI" id="CHEBI:57945"/>
        <dbReference type="ChEBI" id="CHEBI:71579"/>
        <dbReference type="EC" id="1.7.1.17"/>
    </reaction>
</comment>
<comment type="cofactor">
    <cofactor evidence="1">
        <name>FMN</name>
        <dbReference type="ChEBI" id="CHEBI:58210"/>
    </cofactor>
    <text evidence="1">Binds 1 FMN per subunit.</text>
</comment>
<comment type="subunit">
    <text evidence="1">Homodimer.</text>
</comment>
<comment type="similarity">
    <text evidence="1">Belongs to the azoreductase type 1 family.</text>
</comment>
<reference key="1">
    <citation type="journal article" date="2005" name="Science">
        <title>Genome streamlining in a cosmopolitan oceanic bacterium.</title>
        <authorList>
            <person name="Giovannoni S.J."/>
            <person name="Tripp H.J."/>
            <person name="Givan S."/>
            <person name="Podar M."/>
            <person name="Vergin K.L."/>
            <person name="Baptista D."/>
            <person name="Bibbs L."/>
            <person name="Eads J."/>
            <person name="Richardson T.H."/>
            <person name="Noordewier M."/>
            <person name="Rappe M.S."/>
            <person name="Short J.M."/>
            <person name="Carrington J.C."/>
            <person name="Mathur E.J."/>
        </authorList>
    </citation>
    <scope>NUCLEOTIDE SEQUENCE [LARGE SCALE GENOMIC DNA]</scope>
    <source>
        <strain>HTCC1062</strain>
    </source>
</reference>
<proteinExistence type="inferred from homology"/>
<gene>
    <name evidence="1" type="primary">azoR</name>
    <name type="ordered locus">SAR11_0782</name>
</gene>
<feature type="chain" id="PRO_0000245941" description="FMN-dependent NADH:quinone oxidoreductase">
    <location>
        <begin position="1"/>
        <end position="193"/>
    </location>
</feature>
<feature type="binding site" evidence="1">
    <location>
        <position position="9"/>
    </location>
    <ligand>
        <name>FMN</name>
        <dbReference type="ChEBI" id="CHEBI:58210"/>
    </ligand>
</feature>
<feature type="binding site" evidence="1">
    <location>
        <begin position="15"/>
        <end position="17"/>
    </location>
    <ligand>
        <name>FMN</name>
        <dbReference type="ChEBI" id="CHEBI:58210"/>
    </ligand>
</feature>
<feature type="binding site" evidence="1">
    <location>
        <begin position="137"/>
        <end position="140"/>
    </location>
    <ligand>
        <name>FMN</name>
        <dbReference type="ChEBI" id="CHEBI:58210"/>
    </ligand>
</feature>
<sequence length="193" mass="21846">MKIYQIDSSARKEGSSSRALAKKLLNKIKKPGDEVIYRDLDDDMLFVSGLTESGMKIAEKDQTEEHKKMFELSDKLVSELKESDIIIISAPIYNYGPPATLKAWCDLAARIGETFKFKPNGRREGLLKNKQAYLVITSGGTKLNSSEDFLTPWLKFILNFFGIEKVEVISADQMALDYEKSIKEAEKQIENII</sequence>
<organism>
    <name type="scientific">Pelagibacter ubique (strain HTCC1062)</name>
    <dbReference type="NCBI Taxonomy" id="335992"/>
    <lineage>
        <taxon>Bacteria</taxon>
        <taxon>Pseudomonadati</taxon>
        <taxon>Pseudomonadota</taxon>
        <taxon>Alphaproteobacteria</taxon>
        <taxon>Candidatus Pelagibacterales</taxon>
        <taxon>Candidatus Pelagibacteraceae</taxon>
        <taxon>Candidatus Pelagibacter</taxon>
    </lineage>
</organism>
<name>AZOR_PELUB</name>
<accession>Q4FMI9</accession>